<accession>Q4WJS2</accession>
<name>VTS1_ASPFU</name>
<protein>
    <recommendedName>
        <fullName>RNA-binding protein vts1</fullName>
    </recommendedName>
</protein>
<evidence type="ECO:0000250" key="1">
    <source>
        <dbReference type="UniProtKB" id="J9VVN9"/>
    </source>
</evidence>
<evidence type="ECO:0000250" key="2">
    <source>
        <dbReference type="UniProtKB" id="Q08831"/>
    </source>
</evidence>
<evidence type="ECO:0000255" key="3">
    <source>
        <dbReference type="PROSITE-ProRule" id="PRU00184"/>
    </source>
</evidence>
<evidence type="ECO:0000256" key="4">
    <source>
        <dbReference type="SAM" id="MobiDB-lite"/>
    </source>
</evidence>
<evidence type="ECO:0000305" key="5"/>
<keyword id="KW-0963">Cytoplasm</keyword>
<keyword id="KW-0547">Nucleotide-binding</keyword>
<keyword id="KW-0653">Protein transport</keyword>
<keyword id="KW-1185">Reference proteome</keyword>
<keyword id="KW-0694">RNA-binding</keyword>
<keyword id="KW-0813">Transport</keyword>
<organism>
    <name type="scientific">Aspergillus fumigatus (strain ATCC MYA-4609 / CBS 101355 / FGSC A1100 / Af293)</name>
    <name type="common">Neosartorya fumigata</name>
    <dbReference type="NCBI Taxonomy" id="330879"/>
    <lineage>
        <taxon>Eukaryota</taxon>
        <taxon>Fungi</taxon>
        <taxon>Dikarya</taxon>
        <taxon>Ascomycota</taxon>
        <taxon>Pezizomycotina</taxon>
        <taxon>Eurotiomycetes</taxon>
        <taxon>Eurotiomycetidae</taxon>
        <taxon>Eurotiales</taxon>
        <taxon>Aspergillaceae</taxon>
        <taxon>Aspergillus</taxon>
        <taxon>Aspergillus subgen. Fumigati</taxon>
    </lineage>
</organism>
<dbReference type="EMBL" id="AAHF01000007">
    <property type="protein sequence ID" value="EAL88210.2"/>
    <property type="molecule type" value="Genomic_DNA"/>
</dbReference>
<dbReference type="RefSeq" id="XP_750248.2">
    <property type="nucleotide sequence ID" value="XM_745155.2"/>
</dbReference>
<dbReference type="SMR" id="Q4WJS2"/>
<dbReference type="STRING" id="330879.Q4WJS2"/>
<dbReference type="EnsemblFungi" id="EAL88210">
    <property type="protein sequence ID" value="EAL88210"/>
    <property type="gene ID" value="AFUA_1G04990"/>
</dbReference>
<dbReference type="GeneID" id="3507442"/>
<dbReference type="KEGG" id="afm:AFUA_1G04990"/>
<dbReference type="VEuPathDB" id="FungiDB:Afu1g04990"/>
<dbReference type="eggNOG" id="KOG3791">
    <property type="taxonomic scope" value="Eukaryota"/>
</dbReference>
<dbReference type="HOGENOM" id="CLU_017632_0_0_1"/>
<dbReference type="InParanoid" id="Q4WJS2"/>
<dbReference type="OMA" id="MSTVNNR"/>
<dbReference type="OrthoDB" id="2155283at2759"/>
<dbReference type="Proteomes" id="UP000002530">
    <property type="component" value="Chromosome 1"/>
</dbReference>
<dbReference type="GO" id="GO:0005829">
    <property type="term" value="C:cytosol"/>
    <property type="evidence" value="ECO:0007669"/>
    <property type="project" value="UniProtKB-SubCell"/>
</dbReference>
<dbReference type="GO" id="GO:0000932">
    <property type="term" value="C:P-body"/>
    <property type="evidence" value="ECO:0000318"/>
    <property type="project" value="GO_Central"/>
</dbReference>
<dbReference type="GO" id="GO:0003729">
    <property type="term" value="F:mRNA binding"/>
    <property type="evidence" value="ECO:0000318"/>
    <property type="project" value="GO_Central"/>
</dbReference>
<dbReference type="GO" id="GO:0000166">
    <property type="term" value="F:nucleotide binding"/>
    <property type="evidence" value="ECO:0007669"/>
    <property type="project" value="UniProtKB-KW"/>
</dbReference>
<dbReference type="GO" id="GO:0000289">
    <property type="term" value="P:nuclear-transcribed mRNA poly(A) tail shortening"/>
    <property type="evidence" value="ECO:0000318"/>
    <property type="project" value="GO_Central"/>
</dbReference>
<dbReference type="GO" id="GO:0015031">
    <property type="term" value="P:protein transport"/>
    <property type="evidence" value="ECO:0007669"/>
    <property type="project" value="UniProtKB-KW"/>
</dbReference>
<dbReference type="CDD" id="cd09556">
    <property type="entry name" value="SAM_VTS1_fungal"/>
    <property type="match status" value="1"/>
</dbReference>
<dbReference type="FunFam" id="1.10.150.50:FF:000033">
    <property type="entry name" value="Protein vts1, variant"/>
    <property type="match status" value="1"/>
</dbReference>
<dbReference type="Gene3D" id="1.10.150.50">
    <property type="entry name" value="Transcription Factor, Ets-1"/>
    <property type="match status" value="1"/>
</dbReference>
<dbReference type="InterPro" id="IPR001660">
    <property type="entry name" value="SAM"/>
</dbReference>
<dbReference type="InterPro" id="IPR013761">
    <property type="entry name" value="SAM/pointed_sf"/>
</dbReference>
<dbReference type="InterPro" id="IPR050897">
    <property type="entry name" value="SMAUG/VTS1_RNA-bind"/>
</dbReference>
<dbReference type="InterPro" id="IPR037635">
    <property type="entry name" value="VTS1_SAM"/>
</dbReference>
<dbReference type="PANTHER" id="PTHR12515:SF5">
    <property type="entry name" value="PROTEIN SMAUG"/>
    <property type="match status" value="1"/>
</dbReference>
<dbReference type="PANTHER" id="PTHR12515">
    <property type="entry name" value="STERILE ALPHA MOTIF DOMAIN CONTAINING PROTEIN 4-RELATED"/>
    <property type="match status" value="1"/>
</dbReference>
<dbReference type="Pfam" id="PF07647">
    <property type="entry name" value="SAM_2"/>
    <property type="match status" value="1"/>
</dbReference>
<dbReference type="Pfam" id="PF25479">
    <property type="entry name" value="Vts1"/>
    <property type="match status" value="1"/>
</dbReference>
<dbReference type="SMART" id="SM00454">
    <property type="entry name" value="SAM"/>
    <property type="match status" value="1"/>
</dbReference>
<dbReference type="SUPFAM" id="SSF47769">
    <property type="entry name" value="SAM/Pointed domain"/>
    <property type="match status" value="1"/>
</dbReference>
<dbReference type="PROSITE" id="PS50105">
    <property type="entry name" value="SAM_DOMAIN"/>
    <property type="match status" value="1"/>
</dbReference>
<proteinExistence type="inferred from homology"/>
<gene>
    <name type="primary">vts1</name>
    <name type="ORF">AFUA_1G04990</name>
</gene>
<feature type="chain" id="PRO_0000081447" description="RNA-binding protein vts1">
    <location>
        <begin position="1"/>
        <end position="612"/>
    </location>
</feature>
<feature type="domain" description="SAM" evidence="3">
    <location>
        <begin position="541"/>
        <end position="602"/>
    </location>
</feature>
<feature type="region of interest" description="Disordered" evidence="4">
    <location>
        <begin position="1"/>
        <end position="74"/>
    </location>
</feature>
<feature type="region of interest" description="Disordered" evidence="4">
    <location>
        <begin position="184"/>
        <end position="209"/>
    </location>
</feature>
<feature type="region of interest" description="Disordered" evidence="4">
    <location>
        <begin position="253"/>
        <end position="311"/>
    </location>
</feature>
<feature type="region of interest" description="Disordered" evidence="4">
    <location>
        <begin position="391"/>
        <end position="411"/>
    </location>
</feature>
<feature type="region of interest" description="Disordered" evidence="4">
    <location>
        <begin position="511"/>
        <end position="544"/>
    </location>
</feature>
<feature type="compositionally biased region" description="Low complexity" evidence="4">
    <location>
        <begin position="16"/>
        <end position="31"/>
    </location>
</feature>
<feature type="compositionally biased region" description="Low complexity" evidence="4">
    <location>
        <begin position="44"/>
        <end position="56"/>
    </location>
</feature>
<feature type="compositionally biased region" description="Polar residues" evidence="4">
    <location>
        <begin position="58"/>
        <end position="70"/>
    </location>
</feature>
<feature type="compositionally biased region" description="Polar residues" evidence="4">
    <location>
        <begin position="288"/>
        <end position="311"/>
    </location>
</feature>
<feature type="compositionally biased region" description="Polar residues" evidence="4">
    <location>
        <begin position="396"/>
        <end position="411"/>
    </location>
</feature>
<feature type="compositionally biased region" description="Basic and acidic residues" evidence="4">
    <location>
        <begin position="511"/>
        <end position="520"/>
    </location>
</feature>
<sequence>MASHIIGNRNSTPDASKSSLRPPSSSRNLGSHQLRASADMSGFPSPLSSRSIRPSSEVYYSQQSQAQNNAEDPLDRAAQQWLADIDQYETTLEEMAAATLDQDFKDELSAIEQWFRVLSEAERTAALYALLQQTTQVQIRFFIQVLQQMAKSHPMSGLLSPANFSEKDAMSNRLNDAMSKLNIDSSRNSLGRPPPSPGAKRNSGLDSSTINAMFPDAAAAIAKKKAEFTQQTGNAPPSNRNSAVYGDRSSLVAPTISAPDNTDNLGQPPASPWAQRGNEPQPPIARPKSSSGQQPMGQFSQASSGLRSPLPTQTATITAPEIEAPLLSPYNVGNASWASMTNTPMTATFGQQVHQPPNSQADMVANATAMKLAALSTVNNRIALDDARKYRRARSNDGQGRSSNTNVNQTIQGGLASPGLPGANHLVAGQLLNAQQLAALQAQQQAAMAGRRSRPTSPGIAMQGGALAAMGFTSPQNNGFLAAYDPNNPLLGNGLGALGLSQFGLGGHEGYLSDHSEVTRGRSPRGRRGSSKPPEDPTDPNLLKDIPSWLRSLRLHKYTDNLKDLKWTELIELDDKALEERGVNALGARNKMLKVFEQVKEAKSEGKLDSIA</sequence>
<reference key="1">
    <citation type="journal article" date="2005" name="Nature">
        <title>Genomic sequence of the pathogenic and allergenic filamentous fungus Aspergillus fumigatus.</title>
        <authorList>
            <person name="Nierman W.C."/>
            <person name="Pain A."/>
            <person name="Anderson M.J."/>
            <person name="Wortman J.R."/>
            <person name="Kim H.S."/>
            <person name="Arroyo J."/>
            <person name="Berriman M."/>
            <person name="Abe K."/>
            <person name="Archer D.B."/>
            <person name="Bermejo C."/>
            <person name="Bennett J.W."/>
            <person name="Bowyer P."/>
            <person name="Chen D."/>
            <person name="Collins M."/>
            <person name="Coulsen R."/>
            <person name="Davies R."/>
            <person name="Dyer P.S."/>
            <person name="Farman M.L."/>
            <person name="Fedorova N."/>
            <person name="Fedorova N.D."/>
            <person name="Feldblyum T.V."/>
            <person name="Fischer R."/>
            <person name="Fosker N."/>
            <person name="Fraser A."/>
            <person name="Garcia J.L."/>
            <person name="Garcia M.J."/>
            <person name="Goble A."/>
            <person name="Goldman G.H."/>
            <person name="Gomi K."/>
            <person name="Griffith-Jones S."/>
            <person name="Gwilliam R."/>
            <person name="Haas B.J."/>
            <person name="Haas H."/>
            <person name="Harris D.E."/>
            <person name="Horiuchi H."/>
            <person name="Huang J."/>
            <person name="Humphray S."/>
            <person name="Jimenez J."/>
            <person name="Keller N."/>
            <person name="Khouri H."/>
            <person name="Kitamoto K."/>
            <person name="Kobayashi T."/>
            <person name="Konzack S."/>
            <person name="Kulkarni R."/>
            <person name="Kumagai T."/>
            <person name="Lafton A."/>
            <person name="Latge J.-P."/>
            <person name="Li W."/>
            <person name="Lord A."/>
            <person name="Lu C."/>
            <person name="Majoros W.H."/>
            <person name="May G.S."/>
            <person name="Miller B.L."/>
            <person name="Mohamoud Y."/>
            <person name="Molina M."/>
            <person name="Monod M."/>
            <person name="Mouyna I."/>
            <person name="Mulligan S."/>
            <person name="Murphy L.D."/>
            <person name="O'Neil S."/>
            <person name="Paulsen I."/>
            <person name="Penalva M.A."/>
            <person name="Pertea M."/>
            <person name="Price C."/>
            <person name="Pritchard B.L."/>
            <person name="Quail M.A."/>
            <person name="Rabbinowitsch E."/>
            <person name="Rawlins N."/>
            <person name="Rajandream M.A."/>
            <person name="Reichard U."/>
            <person name="Renauld H."/>
            <person name="Robson G.D."/>
            <person name="Rodriguez de Cordoba S."/>
            <person name="Rodriguez-Pena J.M."/>
            <person name="Ronning C.M."/>
            <person name="Rutter S."/>
            <person name="Salzberg S.L."/>
            <person name="Sanchez M."/>
            <person name="Sanchez-Ferrero J.C."/>
            <person name="Saunders D."/>
            <person name="Seeger K."/>
            <person name="Squares R."/>
            <person name="Squares S."/>
            <person name="Takeuchi M."/>
            <person name="Tekaia F."/>
            <person name="Turner G."/>
            <person name="Vazquez de Aldana C.R."/>
            <person name="Weidman J."/>
            <person name="White O."/>
            <person name="Woodward J.R."/>
            <person name="Yu J.-H."/>
            <person name="Fraser C.M."/>
            <person name="Galagan J.E."/>
            <person name="Asai K."/>
            <person name="Machida M."/>
            <person name="Hall N."/>
            <person name="Barrell B.G."/>
            <person name="Denning D.W."/>
        </authorList>
    </citation>
    <scope>NUCLEOTIDE SEQUENCE [LARGE SCALE GENOMIC DNA]</scope>
    <source>
        <strain>ATCC MYA-4609 / CBS 101355 / FGSC A1100 / Af293</strain>
    </source>
</reference>
<comment type="function">
    <text evidence="2">RNA-binding protein involved in post-transcriptional regulation through transcript degradation.</text>
</comment>
<comment type="subunit">
    <text evidence="2">Monomer. Binds to RNA.</text>
</comment>
<comment type="subcellular location">
    <subcellularLocation>
        <location evidence="2">Cytoplasm</location>
        <location evidence="2">Cytosol</location>
    </subcellularLocation>
    <subcellularLocation>
        <location evidence="1">Cytoplasm</location>
        <location evidence="1">P-body</location>
    </subcellularLocation>
</comment>
<comment type="similarity">
    <text evidence="5">Belongs to the VTS1 family.</text>
</comment>